<organism>
    <name type="scientific">Staphylococcus aureus (strain NCTC 8325 / PS 47)</name>
    <dbReference type="NCBI Taxonomy" id="93061"/>
    <lineage>
        <taxon>Bacteria</taxon>
        <taxon>Bacillati</taxon>
        <taxon>Bacillota</taxon>
        <taxon>Bacilli</taxon>
        <taxon>Bacillales</taxon>
        <taxon>Staphylococcaceae</taxon>
        <taxon>Staphylococcus</taxon>
    </lineage>
</organism>
<proteinExistence type="inferred from homology"/>
<comment type="function">
    <text evidence="1">Catalyzes the ATP-dependent phosphorylation of L-homoserine to L-homoserine phosphate.</text>
</comment>
<comment type="catalytic activity">
    <reaction evidence="1">
        <text>L-homoserine + ATP = O-phospho-L-homoserine + ADP + H(+)</text>
        <dbReference type="Rhea" id="RHEA:13985"/>
        <dbReference type="ChEBI" id="CHEBI:15378"/>
        <dbReference type="ChEBI" id="CHEBI:30616"/>
        <dbReference type="ChEBI" id="CHEBI:57476"/>
        <dbReference type="ChEBI" id="CHEBI:57590"/>
        <dbReference type="ChEBI" id="CHEBI:456216"/>
        <dbReference type="EC" id="2.7.1.39"/>
    </reaction>
</comment>
<comment type="pathway">
    <text evidence="1">Amino-acid biosynthesis; L-threonine biosynthesis; L-threonine from L-aspartate: step 4/5.</text>
</comment>
<comment type="subcellular location">
    <subcellularLocation>
        <location evidence="1">Cytoplasm</location>
    </subcellularLocation>
</comment>
<comment type="similarity">
    <text evidence="1">Belongs to the GHMP kinase family. Homoserine kinase subfamily.</text>
</comment>
<feature type="chain" id="PRO_1000049171" description="Homoserine kinase">
    <location>
        <begin position="1"/>
        <end position="304"/>
    </location>
</feature>
<feature type="binding site" evidence="1">
    <location>
        <begin position="90"/>
        <end position="100"/>
    </location>
    <ligand>
        <name>ATP</name>
        <dbReference type="ChEBI" id="CHEBI:30616"/>
    </ligand>
</feature>
<keyword id="KW-0028">Amino-acid biosynthesis</keyword>
<keyword id="KW-0067">ATP-binding</keyword>
<keyword id="KW-0963">Cytoplasm</keyword>
<keyword id="KW-0418">Kinase</keyword>
<keyword id="KW-0547">Nucleotide-binding</keyword>
<keyword id="KW-1185">Reference proteome</keyword>
<keyword id="KW-0791">Threonine biosynthesis</keyword>
<keyword id="KW-0808">Transferase</keyword>
<reference key="1">
    <citation type="book" date="2006" name="Gram positive pathogens, 2nd edition">
        <title>The Staphylococcus aureus NCTC 8325 genome.</title>
        <editorList>
            <person name="Fischetti V."/>
            <person name="Novick R."/>
            <person name="Ferretti J."/>
            <person name="Portnoy D."/>
            <person name="Rood J."/>
        </editorList>
        <authorList>
            <person name="Gillaspy A.F."/>
            <person name="Worrell V."/>
            <person name="Orvis J."/>
            <person name="Roe B.A."/>
            <person name="Dyer D.W."/>
            <person name="Iandolo J.J."/>
        </authorList>
    </citation>
    <scope>NUCLEOTIDE SEQUENCE [LARGE SCALE GENOMIC DNA]</scope>
    <source>
        <strain>NCTC 8325 / PS 47</strain>
    </source>
</reference>
<name>KHSE_STAA8</name>
<gene>
    <name evidence="1" type="primary">thrB</name>
    <name type="ordered locus">SAOUHSC_01322</name>
</gene>
<sequence>MSNVLELTIPASTANLGVGFDSIGMALDKFLHLSVKETSGTKWEYIFHDDASKQLPTDETNFIYHVAQQVASKYSVDLPNLCIEMRSDIPLARGLGSSASALVGAIYIANYFGDIQLSKHEVLQLATEIEGHPDNVAPTIYGGLIAGYYNDVSKETSVAHIDIPDVDVIVTIPTYELKTEASRRALPQKLTHSEAVKSSAISNTMICALAQHNYELAGKLMQQDGFHEPYRQHLIAEFDEVKTIASQHNAYATVISGAGPTILIFSRKENSGELVRSLNSQVVSCHSELVDINISGVKERIVYQ</sequence>
<dbReference type="EC" id="2.7.1.39" evidence="1"/>
<dbReference type="EMBL" id="CP000253">
    <property type="protein sequence ID" value="ABD30420.1"/>
    <property type="molecule type" value="Genomic_DNA"/>
</dbReference>
<dbReference type="RefSeq" id="WP_000073184.1">
    <property type="nucleotide sequence ID" value="NZ_LS483365.1"/>
</dbReference>
<dbReference type="RefSeq" id="YP_499852.1">
    <property type="nucleotide sequence ID" value="NC_007795.1"/>
</dbReference>
<dbReference type="SMR" id="Q2FYV2"/>
<dbReference type="STRING" id="93061.SAOUHSC_01322"/>
<dbReference type="PaxDb" id="1280-SAXN108_1347"/>
<dbReference type="GeneID" id="3920148"/>
<dbReference type="KEGG" id="sao:SAOUHSC_01322"/>
<dbReference type="PATRIC" id="fig|93061.5.peg.1209"/>
<dbReference type="eggNOG" id="COG0083">
    <property type="taxonomic scope" value="Bacteria"/>
</dbReference>
<dbReference type="HOGENOM" id="CLU_041243_0_0_9"/>
<dbReference type="OrthoDB" id="9769912at2"/>
<dbReference type="UniPathway" id="UPA00050">
    <property type="reaction ID" value="UER00064"/>
</dbReference>
<dbReference type="PRO" id="PR:Q2FYV2"/>
<dbReference type="Proteomes" id="UP000008816">
    <property type="component" value="Chromosome"/>
</dbReference>
<dbReference type="GO" id="GO:0005737">
    <property type="term" value="C:cytoplasm"/>
    <property type="evidence" value="ECO:0007669"/>
    <property type="project" value="UniProtKB-SubCell"/>
</dbReference>
<dbReference type="GO" id="GO:0005524">
    <property type="term" value="F:ATP binding"/>
    <property type="evidence" value="ECO:0007669"/>
    <property type="project" value="UniProtKB-UniRule"/>
</dbReference>
<dbReference type="GO" id="GO:0004413">
    <property type="term" value="F:homoserine kinase activity"/>
    <property type="evidence" value="ECO:0007669"/>
    <property type="project" value="UniProtKB-UniRule"/>
</dbReference>
<dbReference type="GO" id="GO:0009088">
    <property type="term" value="P:threonine biosynthetic process"/>
    <property type="evidence" value="ECO:0007669"/>
    <property type="project" value="UniProtKB-UniRule"/>
</dbReference>
<dbReference type="Gene3D" id="3.30.230.10">
    <property type="match status" value="1"/>
</dbReference>
<dbReference type="Gene3D" id="3.30.70.890">
    <property type="entry name" value="GHMP kinase, C-terminal domain"/>
    <property type="match status" value="1"/>
</dbReference>
<dbReference type="HAMAP" id="MF_00384">
    <property type="entry name" value="Homoser_kinase"/>
    <property type="match status" value="1"/>
</dbReference>
<dbReference type="InterPro" id="IPR013750">
    <property type="entry name" value="GHMP_kinase_C_dom"/>
</dbReference>
<dbReference type="InterPro" id="IPR036554">
    <property type="entry name" value="GHMP_kinase_C_sf"/>
</dbReference>
<dbReference type="InterPro" id="IPR006204">
    <property type="entry name" value="GHMP_kinase_N_dom"/>
</dbReference>
<dbReference type="InterPro" id="IPR006203">
    <property type="entry name" value="GHMP_knse_ATP-bd_CS"/>
</dbReference>
<dbReference type="InterPro" id="IPR000870">
    <property type="entry name" value="Homoserine_kinase"/>
</dbReference>
<dbReference type="InterPro" id="IPR020568">
    <property type="entry name" value="Ribosomal_Su5_D2-typ_SF"/>
</dbReference>
<dbReference type="InterPro" id="IPR014721">
    <property type="entry name" value="Ribsml_uS5_D2-typ_fold_subgr"/>
</dbReference>
<dbReference type="NCBIfam" id="TIGR00191">
    <property type="entry name" value="thrB"/>
    <property type="match status" value="1"/>
</dbReference>
<dbReference type="PANTHER" id="PTHR20861:SF1">
    <property type="entry name" value="HOMOSERINE KINASE"/>
    <property type="match status" value="1"/>
</dbReference>
<dbReference type="PANTHER" id="PTHR20861">
    <property type="entry name" value="HOMOSERINE/4-DIPHOSPHOCYTIDYL-2-C-METHYL-D-ERYTHRITOL KINASE"/>
    <property type="match status" value="1"/>
</dbReference>
<dbReference type="Pfam" id="PF08544">
    <property type="entry name" value="GHMP_kinases_C"/>
    <property type="match status" value="1"/>
</dbReference>
<dbReference type="Pfam" id="PF00288">
    <property type="entry name" value="GHMP_kinases_N"/>
    <property type="match status" value="1"/>
</dbReference>
<dbReference type="PIRSF" id="PIRSF000676">
    <property type="entry name" value="Homoser_kin"/>
    <property type="match status" value="1"/>
</dbReference>
<dbReference type="PRINTS" id="PR00958">
    <property type="entry name" value="HOMSERKINASE"/>
</dbReference>
<dbReference type="SUPFAM" id="SSF55060">
    <property type="entry name" value="GHMP Kinase, C-terminal domain"/>
    <property type="match status" value="1"/>
</dbReference>
<dbReference type="SUPFAM" id="SSF54211">
    <property type="entry name" value="Ribosomal protein S5 domain 2-like"/>
    <property type="match status" value="1"/>
</dbReference>
<dbReference type="PROSITE" id="PS00627">
    <property type="entry name" value="GHMP_KINASES_ATP"/>
    <property type="match status" value="1"/>
</dbReference>
<evidence type="ECO:0000255" key="1">
    <source>
        <dbReference type="HAMAP-Rule" id="MF_00384"/>
    </source>
</evidence>
<accession>Q2FYV2</accession>
<protein>
    <recommendedName>
        <fullName evidence="1">Homoserine kinase</fullName>
        <shortName evidence="1">HK</shortName>
        <shortName evidence="1">HSK</shortName>
        <ecNumber evidence="1">2.7.1.39</ecNumber>
    </recommendedName>
</protein>